<accession>Q5HDY3</accession>
<protein>
    <recommendedName>
        <fullName evidence="1">Small ribosomal subunit protein uS11</fullName>
    </recommendedName>
    <alternativeName>
        <fullName evidence="2">30S ribosomal protein S11</fullName>
    </alternativeName>
</protein>
<organism>
    <name type="scientific">Staphylococcus aureus (strain COL)</name>
    <dbReference type="NCBI Taxonomy" id="93062"/>
    <lineage>
        <taxon>Bacteria</taxon>
        <taxon>Bacillati</taxon>
        <taxon>Bacillota</taxon>
        <taxon>Bacilli</taxon>
        <taxon>Bacillales</taxon>
        <taxon>Staphylococcaceae</taxon>
        <taxon>Staphylococcus</taxon>
    </lineage>
</organism>
<feature type="chain" id="PRO_0000123218" description="Small ribosomal subunit protein uS11">
    <location>
        <begin position="1"/>
        <end position="129"/>
    </location>
</feature>
<keyword id="KW-0687">Ribonucleoprotein</keyword>
<keyword id="KW-0689">Ribosomal protein</keyword>
<keyword id="KW-0694">RNA-binding</keyword>
<keyword id="KW-0699">rRNA-binding</keyword>
<name>RS11_STAAC</name>
<reference key="1">
    <citation type="journal article" date="2005" name="J. Bacteriol.">
        <title>Insights on evolution of virulence and resistance from the complete genome analysis of an early methicillin-resistant Staphylococcus aureus strain and a biofilm-producing methicillin-resistant Staphylococcus epidermidis strain.</title>
        <authorList>
            <person name="Gill S.R."/>
            <person name="Fouts D.E."/>
            <person name="Archer G.L."/>
            <person name="Mongodin E.F."/>
            <person name="DeBoy R.T."/>
            <person name="Ravel J."/>
            <person name="Paulsen I.T."/>
            <person name="Kolonay J.F."/>
            <person name="Brinkac L.M."/>
            <person name="Beanan M.J."/>
            <person name="Dodson R.J."/>
            <person name="Daugherty S.C."/>
            <person name="Madupu R."/>
            <person name="Angiuoli S.V."/>
            <person name="Durkin A.S."/>
            <person name="Haft D.H."/>
            <person name="Vamathevan J.J."/>
            <person name="Khouri H."/>
            <person name="Utterback T.R."/>
            <person name="Lee C."/>
            <person name="Dimitrov G."/>
            <person name="Jiang L."/>
            <person name="Qin H."/>
            <person name="Weidman J."/>
            <person name="Tran K."/>
            <person name="Kang K.H."/>
            <person name="Hance I.R."/>
            <person name="Nelson K.E."/>
            <person name="Fraser C.M."/>
        </authorList>
    </citation>
    <scope>NUCLEOTIDE SEQUENCE [LARGE SCALE GENOMIC DNA]</scope>
    <source>
        <strain>COL</strain>
    </source>
</reference>
<dbReference type="EMBL" id="CP000046">
    <property type="protein sequence ID" value="AAW37089.1"/>
    <property type="molecule type" value="Genomic_DNA"/>
</dbReference>
<dbReference type="RefSeq" id="WP_000101625.1">
    <property type="nucleotide sequence ID" value="NZ_JBGOFO010000004.1"/>
</dbReference>
<dbReference type="SMR" id="Q5HDY3"/>
<dbReference type="GeneID" id="98346537"/>
<dbReference type="KEGG" id="sac:SACOL2214"/>
<dbReference type="HOGENOM" id="CLU_072439_5_0_9"/>
<dbReference type="Proteomes" id="UP000000530">
    <property type="component" value="Chromosome"/>
</dbReference>
<dbReference type="GO" id="GO:1990904">
    <property type="term" value="C:ribonucleoprotein complex"/>
    <property type="evidence" value="ECO:0007669"/>
    <property type="project" value="UniProtKB-KW"/>
</dbReference>
<dbReference type="GO" id="GO:0005840">
    <property type="term" value="C:ribosome"/>
    <property type="evidence" value="ECO:0007669"/>
    <property type="project" value="UniProtKB-KW"/>
</dbReference>
<dbReference type="GO" id="GO:0019843">
    <property type="term" value="F:rRNA binding"/>
    <property type="evidence" value="ECO:0007669"/>
    <property type="project" value="UniProtKB-UniRule"/>
</dbReference>
<dbReference type="GO" id="GO:0003735">
    <property type="term" value="F:structural constituent of ribosome"/>
    <property type="evidence" value="ECO:0007669"/>
    <property type="project" value="InterPro"/>
</dbReference>
<dbReference type="GO" id="GO:0006412">
    <property type="term" value="P:translation"/>
    <property type="evidence" value="ECO:0007669"/>
    <property type="project" value="UniProtKB-UniRule"/>
</dbReference>
<dbReference type="FunFam" id="3.30.420.80:FF:000001">
    <property type="entry name" value="30S ribosomal protein S11"/>
    <property type="match status" value="1"/>
</dbReference>
<dbReference type="Gene3D" id="3.30.420.80">
    <property type="entry name" value="Ribosomal protein S11"/>
    <property type="match status" value="1"/>
</dbReference>
<dbReference type="HAMAP" id="MF_01310">
    <property type="entry name" value="Ribosomal_uS11"/>
    <property type="match status" value="1"/>
</dbReference>
<dbReference type="InterPro" id="IPR001971">
    <property type="entry name" value="Ribosomal_uS11"/>
</dbReference>
<dbReference type="InterPro" id="IPR019981">
    <property type="entry name" value="Ribosomal_uS11_bac-type"/>
</dbReference>
<dbReference type="InterPro" id="IPR018102">
    <property type="entry name" value="Ribosomal_uS11_CS"/>
</dbReference>
<dbReference type="InterPro" id="IPR036967">
    <property type="entry name" value="Ribosomal_uS11_sf"/>
</dbReference>
<dbReference type="NCBIfam" id="NF003698">
    <property type="entry name" value="PRK05309.1"/>
    <property type="match status" value="1"/>
</dbReference>
<dbReference type="NCBIfam" id="TIGR03632">
    <property type="entry name" value="uS11_bact"/>
    <property type="match status" value="1"/>
</dbReference>
<dbReference type="PANTHER" id="PTHR11759">
    <property type="entry name" value="40S RIBOSOMAL PROTEIN S14/30S RIBOSOMAL PROTEIN S11"/>
    <property type="match status" value="1"/>
</dbReference>
<dbReference type="Pfam" id="PF00411">
    <property type="entry name" value="Ribosomal_S11"/>
    <property type="match status" value="1"/>
</dbReference>
<dbReference type="PIRSF" id="PIRSF002131">
    <property type="entry name" value="Ribosomal_S11"/>
    <property type="match status" value="1"/>
</dbReference>
<dbReference type="SUPFAM" id="SSF53137">
    <property type="entry name" value="Translational machinery components"/>
    <property type="match status" value="1"/>
</dbReference>
<dbReference type="PROSITE" id="PS00054">
    <property type="entry name" value="RIBOSOMAL_S11"/>
    <property type="match status" value="1"/>
</dbReference>
<proteinExistence type="inferred from homology"/>
<sequence length="129" mass="13882">MARKQVSRKRRVKKNIENGVAHIRSTFNNTIVTITDEFGNALSWSSAGALGFKGSKKSTPFAAQMASETASKSAMEHGLKTVEVTVKGPGPGRESAIRALQSAGLEVTAIRDVTPVPHNGCRPPKRRRV</sequence>
<comment type="function">
    <text evidence="1">Located on the platform of the 30S subunit, it bridges several disparate RNA helices of the 16S rRNA. Forms part of the Shine-Dalgarno cleft in the 70S ribosome.</text>
</comment>
<comment type="subunit">
    <text evidence="1">Part of the 30S ribosomal subunit. Interacts with proteins S7 and S18. Binds to IF-3.</text>
</comment>
<comment type="similarity">
    <text evidence="1">Belongs to the universal ribosomal protein uS11 family.</text>
</comment>
<gene>
    <name evidence="1" type="primary">rpsK</name>
    <name type="ordered locus">SACOL2214</name>
</gene>
<evidence type="ECO:0000255" key="1">
    <source>
        <dbReference type="HAMAP-Rule" id="MF_01310"/>
    </source>
</evidence>
<evidence type="ECO:0000305" key="2"/>